<protein>
    <recommendedName>
        <fullName evidence="1">Pyridoxal 5'-phosphate synthase subunit PdxT</fullName>
        <ecNumber evidence="1">4.3.3.6</ecNumber>
    </recommendedName>
    <alternativeName>
        <fullName evidence="1">Pdx2</fullName>
    </alternativeName>
    <alternativeName>
        <fullName evidence="1">Pyridoxal 5'-phosphate synthase glutaminase subunit</fullName>
        <ecNumber evidence="1">3.5.1.2</ecNumber>
    </alternativeName>
</protein>
<organism>
    <name type="scientific">Staphylococcus aureus (strain MRSA252)</name>
    <dbReference type="NCBI Taxonomy" id="282458"/>
    <lineage>
        <taxon>Bacteria</taxon>
        <taxon>Bacillati</taxon>
        <taxon>Bacillota</taxon>
        <taxon>Bacilli</taxon>
        <taxon>Bacillales</taxon>
        <taxon>Staphylococcaceae</taxon>
        <taxon>Staphylococcus</taxon>
    </lineage>
</organism>
<gene>
    <name evidence="1" type="primary">pdxT</name>
    <name type="ordered locus">SAR0523</name>
</gene>
<evidence type="ECO:0000255" key="1">
    <source>
        <dbReference type="HAMAP-Rule" id="MF_01615"/>
    </source>
</evidence>
<dbReference type="EC" id="4.3.3.6" evidence="1"/>
<dbReference type="EC" id="3.5.1.2" evidence="1"/>
<dbReference type="EMBL" id="BX571856">
    <property type="protein sequence ID" value="CAG39545.1"/>
    <property type="molecule type" value="Genomic_DNA"/>
</dbReference>
<dbReference type="RefSeq" id="WP_000690439.1">
    <property type="nucleotide sequence ID" value="NC_002952.2"/>
</dbReference>
<dbReference type="SMR" id="Q6GJE9"/>
<dbReference type="KEGG" id="sar:SAR0523"/>
<dbReference type="HOGENOM" id="CLU_069674_2_0_9"/>
<dbReference type="UniPathway" id="UPA00245"/>
<dbReference type="Proteomes" id="UP000000596">
    <property type="component" value="Chromosome"/>
</dbReference>
<dbReference type="GO" id="GO:0005829">
    <property type="term" value="C:cytosol"/>
    <property type="evidence" value="ECO:0007669"/>
    <property type="project" value="TreeGrafter"/>
</dbReference>
<dbReference type="GO" id="GO:1903600">
    <property type="term" value="C:glutaminase complex"/>
    <property type="evidence" value="ECO:0007669"/>
    <property type="project" value="TreeGrafter"/>
</dbReference>
<dbReference type="GO" id="GO:0004359">
    <property type="term" value="F:glutaminase activity"/>
    <property type="evidence" value="ECO:0007669"/>
    <property type="project" value="UniProtKB-UniRule"/>
</dbReference>
<dbReference type="GO" id="GO:0036381">
    <property type="term" value="F:pyridoxal 5'-phosphate synthase (glutamine hydrolysing) activity"/>
    <property type="evidence" value="ECO:0007669"/>
    <property type="project" value="UniProtKB-UniRule"/>
</dbReference>
<dbReference type="GO" id="GO:0006543">
    <property type="term" value="P:glutamine catabolic process"/>
    <property type="evidence" value="ECO:0007669"/>
    <property type="project" value="UniProtKB-UniRule"/>
</dbReference>
<dbReference type="GO" id="GO:0042823">
    <property type="term" value="P:pyridoxal phosphate biosynthetic process"/>
    <property type="evidence" value="ECO:0007669"/>
    <property type="project" value="UniProtKB-UniRule"/>
</dbReference>
<dbReference type="GO" id="GO:0008614">
    <property type="term" value="P:pyridoxine metabolic process"/>
    <property type="evidence" value="ECO:0007669"/>
    <property type="project" value="TreeGrafter"/>
</dbReference>
<dbReference type="CDD" id="cd01749">
    <property type="entry name" value="GATase1_PB"/>
    <property type="match status" value="1"/>
</dbReference>
<dbReference type="FunFam" id="3.40.50.880:FF:000010">
    <property type="entry name" value="uncharacterized protein LOC100176842 isoform X2"/>
    <property type="match status" value="1"/>
</dbReference>
<dbReference type="Gene3D" id="3.40.50.880">
    <property type="match status" value="1"/>
</dbReference>
<dbReference type="HAMAP" id="MF_01615">
    <property type="entry name" value="PdxT"/>
    <property type="match status" value="1"/>
</dbReference>
<dbReference type="InterPro" id="IPR029062">
    <property type="entry name" value="Class_I_gatase-like"/>
</dbReference>
<dbReference type="InterPro" id="IPR002161">
    <property type="entry name" value="PdxT/SNO"/>
</dbReference>
<dbReference type="InterPro" id="IPR021196">
    <property type="entry name" value="PdxT/SNO_CS"/>
</dbReference>
<dbReference type="NCBIfam" id="TIGR03800">
    <property type="entry name" value="PLP_synth_Pdx2"/>
    <property type="match status" value="1"/>
</dbReference>
<dbReference type="PANTHER" id="PTHR31559">
    <property type="entry name" value="PYRIDOXAL 5'-PHOSPHATE SYNTHASE SUBUNIT SNO"/>
    <property type="match status" value="1"/>
</dbReference>
<dbReference type="PANTHER" id="PTHR31559:SF0">
    <property type="entry name" value="PYRIDOXAL 5'-PHOSPHATE SYNTHASE SUBUNIT SNO1-RELATED"/>
    <property type="match status" value="1"/>
</dbReference>
<dbReference type="Pfam" id="PF01174">
    <property type="entry name" value="SNO"/>
    <property type="match status" value="1"/>
</dbReference>
<dbReference type="PIRSF" id="PIRSF005639">
    <property type="entry name" value="Glut_amidoT_SNO"/>
    <property type="match status" value="1"/>
</dbReference>
<dbReference type="SUPFAM" id="SSF52317">
    <property type="entry name" value="Class I glutamine amidotransferase-like"/>
    <property type="match status" value="1"/>
</dbReference>
<dbReference type="PROSITE" id="PS01236">
    <property type="entry name" value="PDXT_SNO_1"/>
    <property type="match status" value="1"/>
</dbReference>
<dbReference type="PROSITE" id="PS51130">
    <property type="entry name" value="PDXT_SNO_2"/>
    <property type="match status" value="1"/>
</dbReference>
<keyword id="KW-0315">Glutamine amidotransferase</keyword>
<keyword id="KW-0378">Hydrolase</keyword>
<keyword id="KW-0456">Lyase</keyword>
<keyword id="KW-0663">Pyridoxal phosphate</keyword>
<sequence>MKIGVLALQGAVREHIRHIELSGHEGIAVKKVEQLEEIEGLILPGGESTTLRRLMNLYGFKEALQNSTLPMFGTCAGLIVLAQDIVGEEGYLNKLNITVQRNSFGRQVDSFETELDIKGIATDIEGVFIRAPHIEKVGQGVDILCKVNEKIVAVQQGKYLGVSFHPELTDDYRVTDYFINHIVKKA</sequence>
<feature type="chain" id="PRO_0000135658" description="Pyridoxal 5'-phosphate synthase subunit PdxT">
    <location>
        <begin position="1"/>
        <end position="186"/>
    </location>
</feature>
<feature type="active site" description="Nucleophile" evidence="1">
    <location>
        <position position="75"/>
    </location>
</feature>
<feature type="active site" description="Charge relay system" evidence="1">
    <location>
        <position position="165"/>
    </location>
</feature>
<feature type="active site" description="Charge relay system" evidence="1">
    <location>
        <position position="167"/>
    </location>
</feature>
<feature type="binding site" evidence="1">
    <location>
        <begin position="46"/>
        <end position="48"/>
    </location>
    <ligand>
        <name>L-glutamine</name>
        <dbReference type="ChEBI" id="CHEBI:58359"/>
    </ligand>
</feature>
<feature type="binding site" evidence="1">
    <location>
        <position position="101"/>
    </location>
    <ligand>
        <name>L-glutamine</name>
        <dbReference type="ChEBI" id="CHEBI:58359"/>
    </ligand>
</feature>
<feature type="binding site" evidence="1">
    <location>
        <begin position="129"/>
        <end position="130"/>
    </location>
    <ligand>
        <name>L-glutamine</name>
        <dbReference type="ChEBI" id="CHEBI:58359"/>
    </ligand>
</feature>
<accession>Q6GJE9</accession>
<name>PDXT_STAAR</name>
<proteinExistence type="inferred from homology"/>
<comment type="function">
    <text evidence="1">Catalyzes the hydrolysis of glutamine to glutamate and ammonia as part of the biosynthesis of pyridoxal 5'-phosphate. The resulting ammonia molecule is channeled to the active site of PdxS.</text>
</comment>
<comment type="catalytic activity">
    <reaction evidence="1">
        <text>aldehydo-D-ribose 5-phosphate + D-glyceraldehyde 3-phosphate + L-glutamine = pyridoxal 5'-phosphate + L-glutamate + phosphate + 3 H2O + H(+)</text>
        <dbReference type="Rhea" id="RHEA:31507"/>
        <dbReference type="ChEBI" id="CHEBI:15377"/>
        <dbReference type="ChEBI" id="CHEBI:15378"/>
        <dbReference type="ChEBI" id="CHEBI:29985"/>
        <dbReference type="ChEBI" id="CHEBI:43474"/>
        <dbReference type="ChEBI" id="CHEBI:58273"/>
        <dbReference type="ChEBI" id="CHEBI:58359"/>
        <dbReference type="ChEBI" id="CHEBI:59776"/>
        <dbReference type="ChEBI" id="CHEBI:597326"/>
        <dbReference type="EC" id="4.3.3.6"/>
    </reaction>
</comment>
<comment type="catalytic activity">
    <reaction evidence="1">
        <text>L-glutamine + H2O = L-glutamate + NH4(+)</text>
        <dbReference type="Rhea" id="RHEA:15889"/>
        <dbReference type="ChEBI" id="CHEBI:15377"/>
        <dbReference type="ChEBI" id="CHEBI:28938"/>
        <dbReference type="ChEBI" id="CHEBI:29985"/>
        <dbReference type="ChEBI" id="CHEBI:58359"/>
        <dbReference type="EC" id="3.5.1.2"/>
    </reaction>
</comment>
<comment type="pathway">
    <text evidence="1">Cofactor biosynthesis; pyridoxal 5'-phosphate biosynthesis.</text>
</comment>
<comment type="subunit">
    <text evidence="1">In the presence of PdxS, forms a dodecamer of heterodimers. Only shows activity in the heterodimer.</text>
</comment>
<comment type="similarity">
    <text evidence="1">Belongs to the glutaminase PdxT/SNO family.</text>
</comment>
<reference key="1">
    <citation type="journal article" date="2004" name="Proc. Natl. Acad. Sci. U.S.A.">
        <title>Complete genomes of two clinical Staphylococcus aureus strains: evidence for the rapid evolution of virulence and drug resistance.</title>
        <authorList>
            <person name="Holden M.T.G."/>
            <person name="Feil E.J."/>
            <person name="Lindsay J.A."/>
            <person name="Peacock S.J."/>
            <person name="Day N.P.J."/>
            <person name="Enright M.C."/>
            <person name="Foster T.J."/>
            <person name="Moore C.E."/>
            <person name="Hurst L."/>
            <person name="Atkin R."/>
            <person name="Barron A."/>
            <person name="Bason N."/>
            <person name="Bentley S.D."/>
            <person name="Chillingworth C."/>
            <person name="Chillingworth T."/>
            <person name="Churcher C."/>
            <person name="Clark L."/>
            <person name="Corton C."/>
            <person name="Cronin A."/>
            <person name="Doggett J."/>
            <person name="Dowd L."/>
            <person name="Feltwell T."/>
            <person name="Hance Z."/>
            <person name="Harris B."/>
            <person name="Hauser H."/>
            <person name="Holroyd S."/>
            <person name="Jagels K."/>
            <person name="James K.D."/>
            <person name="Lennard N."/>
            <person name="Line A."/>
            <person name="Mayes R."/>
            <person name="Moule S."/>
            <person name="Mungall K."/>
            <person name="Ormond D."/>
            <person name="Quail M.A."/>
            <person name="Rabbinowitsch E."/>
            <person name="Rutherford K.M."/>
            <person name="Sanders M."/>
            <person name="Sharp S."/>
            <person name="Simmonds M."/>
            <person name="Stevens K."/>
            <person name="Whitehead S."/>
            <person name="Barrell B.G."/>
            <person name="Spratt B.G."/>
            <person name="Parkhill J."/>
        </authorList>
    </citation>
    <scope>NUCLEOTIDE SEQUENCE [LARGE SCALE GENOMIC DNA]</scope>
    <source>
        <strain>MRSA252</strain>
    </source>
</reference>